<keyword id="KW-0072">Autophagy</keyword>
<keyword id="KW-0968">Cytoplasmic vesicle</keyword>
<keyword id="KW-1015">Disulfide bond</keyword>
<keyword id="KW-0325">Glycoprotein</keyword>
<keyword id="KW-0333">Golgi apparatus</keyword>
<keyword id="KW-0472">Membrane</keyword>
<keyword id="KW-0496">Mitochondrion</keyword>
<keyword id="KW-1185">Reference proteome</keyword>
<keyword id="KW-0732">Signal</keyword>
<keyword id="KW-0812">Transmembrane</keyword>
<keyword id="KW-1133">Transmembrane helix</keyword>
<sequence>MARYKGLSILSLFAVFSSLASAELDCSNIKVDGVMWNFGKLGGAHSISETASSHEGYNTTYTLDICKPLTKTLCKKGAFVCAVRNATDINGIERTMDVIDIAGNFVLNSGRTLDPIFTRLKKEDPKTEGLKMELHGGKHKFGNLLKRQKAVITLLCDRERTGLEGLESPKPDGDKKKDGEKKDDDKKDNKDKEGKSKRDGEENKRSLIFKSYNEEEGTLDLEWKTKYACENVEDGGSAPSGHWGFFTWVIVLYVVLVSLPLLSERVTNVRCHSQPVPVHFGLSDIRLVAQLQPVWSSRVGLASSQ</sequence>
<reference key="1">
    <citation type="journal article" date="2011" name="Genome Biol.">
        <title>Comparative and functional genomics provide insights into the pathogenicity of dermatophytic fungi.</title>
        <authorList>
            <person name="Burmester A."/>
            <person name="Shelest E."/>
            <person name="Gloeckner G."/>
            <person name="Heddergott C."/>
            <person name="Schindler S."/>
            <person name="Staib P."/>
            <person name="Heidel A."/>
            <person name="Felder M."/>
            <person name="Petzold A."/>
            <person name="Szafranski K."/>
            <person name="Feuermann M."/>
            <person name="Pedruzzi I."/>
            <person name="Priebe S."/>
            <person name="Groth M."/>
            <person name="Winkler R."/>
            <person name="Li W."/>
            <person name="Kniemeyer O."/>
            <person name="Schroeckh V."/>
            <person name="Hertweck C."/>
            <person name="Hube B."/>
            <person name="White T.C."/>
            <person name="Platzer M."/>
            <person name="Guthke R."/>
            <person name="Heitman J."/>
            <person name="Woestemeyer J."/>
            <person name="Zipfel P.F."/>
            <person name="Monod M."/>
            <person name="Brakhage A.A."/>
        </authorList>
    </citation>
    <scope>NUCLEOTIDE SEQUENCE [LARGE SCALE GENOMIC DNA]</scope>
    <source>
        <strain>ATCC MYA-4681 / CBS 112371</strain>
    </source>
</reference>
<reference key="2">
    <citation type="journal article" date="2011" name="Proteomics">
        <title>Identification of novel secreted proteases during extracellular proteolysis by dermatophytes at acidic pH.</title>
        <authorList>
            <person name="Sriranganadane D."/>
            <person name="Waridel P."/>
            <person name="Salamin K."/>
            <person name="Feuermann M."/>
            <person name="Mignon B."/>
            <person name="Staib P."/>
            <person name="Neuhaus J.M."/>
            <person name="Quadroni M."/>
            <person name="Monod M."/>
        </authorList>
    </citation>
    <scope>IDENTIFICATION BY MASS SPECTROMETRY</scope>
</reference>
<proteinExistence type="evidence at protein level"/>
<comment type="function">
    <text evidence="1">Effector of phosphatidylinositol 3-phosphate kinase signaling (By similarity). Regulates the cytoplasm to vacuole transport (Cvt) vesicle formation. Plays a role in ATG protein retrieval from the pre-autophagosomal structure (PAS) (By similarity).</text>
</comment>
<comment type="subcellular location">
    <subcellularLocation>
        <location evidence="1">Cytoplasmic vesicle membrane</location>
        <topology evidence="2">Single-pass type I membrane protein</topology>
    </subcellularLocation>
    <subcellularLocation>
        <location evidence="1">Golgi apparatus membrane</location>
        <topology evidence="2">Single-pass type I membrane protein</topology>
    </subcellularLocation>
    <subcellularLocation>
        <location evidence="1">Mitochondrion membrane</location>
        <topology>Single-pass membrane protein</topology>
    </subcellularLocation>
    <subcellularLocation>
        <location evidence="1">Preautophagosomal structure membrane</location>
        <topology evidence="2">Single-pass type I membrane protein</topology>
    </subcellularLocation>
    <text evidence="1">Cycles among the pre-autophagosomal structure (PAS), mitochondria and Golgi.</text>
</comment>
<comment type="similarity">
    <text evidence="6">Belongs to the ATG27 family.</text>
</comment>
<name>ATG27_ARTBC</name>
<accession>D4B086</accession>
<organism>
    <name type="scientific">Arthroderma benhamiae (strain ATCC MYA-4681 / CBS 112371)</name>
    <name type="common">Trichophyton mentagrophytes</name>
    <dbReference type="NCBI Taxonomy" id="663331"/>
    <lineage>
        <taxon>Eukaryota</taxon>
        <taxon>Fungi</taxon>
        <taxon>Dikarya</taxon>
        <taxon>Ascomycota</taxon>
        <taxon>Pezizomycotina</taxon>
        <taxon>Eurotiomycetes</taxon>
        <taxon>Eurotiomycetidae</taxon>
        <taxon>Onygenales</taxon>
        <taxon>Arthrodermataceae</taxon>
        <taxon>Trichophyton</taxon>
    </lineage>
</organism>
<protein>
    <recommendedName>
        <fullName evidence="1">Autophagy-related protein 27</fullName>
    </recommendedName>
</protein>
<evidence type="ECO:0000250" key="1">
    <source>
        <dbReference type="UniProtKB" id="P46989"/>
    </source>
</evidence>
<evidence type="ECO:0000255" key="2"/>
<evidence type="ECO:0000255" key="3">
    <source>
        <dbReference type="PROSITE-ProRule" id="PRU00498"/>
    </source>
</evidence>
<evidence type="ECO:0000255" key="4">
    <source>
        <dbReference type="PROSITE-ProRule" id="PRU01262"/>
    </source>
</evidence>
<evidence type="ECO:0000256" key="5">
    <source>
        <dbReference type="SAM" id="MobiDB-lite"/>
    </source>
</evidence>
<evidence type="ECO:0000305" key="6"/>
<dbReference type="EMBL" id="ABSU01000023">
    <property type="protein sequence ID" value="EFE31238.1"/>
    <property type="molecule type" value="Genomic_DNA"/>
</dbReference>
<dbReference type="RefSeq" id="XP_003011878.1">
    <property type="nucleotide sequence ID" value="XM_003011832.1"/>
</dbReference>
<dbReference type="STRING" id="663331.D4B086"/>
<dbReference type="GeneID" id="9526430"/>
<dbReference type="KEGG" id="abe:ARB_01857"/>
<dbReference type="eggNOG" id="ENOG502S1VT">
    <property type="taxonomic scope" value="Eukaryota"/>
</dbReference>
<dbReference type="HOGENOM" id="CLU_047751_0_0_1"/>
<dbReference type="OMA" id="AFDCKDI"/>
<dbReference type="Proteomes" id="UP000008866">
    <property type="component" value="Unassembled WGS sequence"/>
</dbReference>
<dbReference type="GO" id="GO:0030659">
    <property type="term" value="C:cytoplasmic vesicle membrane"/>
    <property type="evidence" value="ECO:0007669"/>
    <property type="project" value="UniProtKB-SubCell"/>
</dbReference>
<dbReference type="GO" id="GO:0000139">
    <property type="term" value="C:Golgi membrane"/>
    <property type="evidence" value="ECO:0007669"/>
    <property type="project" value="UniProtKB-SubCell"/>
</dbReference>
<dbReference type="GO" id="GO:0031966">
    <property type="term" value="C:mitochondrial membrane"/>
    <property type="evidence" value="ECO:0007669"/>
    <property type="project" value="UniProtKB-SubCell"/>
</dbReference>
<dbReference type="GO" id="GO:0034045">
    <property type="term" value="C:phagophore assembly site membrane"/>
    <property type="evidence" value="ECO:0007669"/>
    <property type="project" value="UniProtKB-SubCell"/>
</dbReference>
<dbReference type="GO" id="GO:0006914">
    <property type="term" value="P:autophagy"/>
    <property type="evidence" value="ECO:0007669"/>
    <property type="project" value="UniProtKB-KW"/>
</dbReference>
<dbReference type="Gene3D" id="2.70.130.10">
    <property type="entry name" value="Mannose-6-phosphate receptor binding domain"/>
    <property type="match status" value="1"/>
</dbReference>
<dbReference type="InterPro" id="IPR018939">
    <property type="entry name" value="Autophagy-rel_prot_27"/>
</dbReference>
<dbReference type="InterPro" id="IPR009011">
    <property type="entry name" value="Man6P_isomerase_rcpt-bd_dom_sf"/>
</dbReference>
<dbReference type="InterPro" id="IPR044865">
    <property type="entry name" value="MRH_dom"/>
</dbReference>
<dbReference type="Pfam" id="PF09451">
    <property type="entry name" value="ATG27"/>
    <property type="match status" value="1"/>
</dbReference>
<dbReference type="SUPFAM" id="SSF50911">
    <property type="entry name" value="Mannose 6-phosphate receptor domain"/>
    <property type="match status" value="1"/>
</dbReference>
<dbReference type="PROSITE" id="PS51914">
    <property type="entry name" value="MRH"/>
    <property type="match status" value="1"/>
</dbReference>
<gene>
    <name type="ORF">ARB_01857</name>
</gene>
<feature type="signal peptide" evidence="2">
    <location>
        <begin position="1"/>
        <end position="22"/>
    </location>
</feature>
<feature type="chain" id="PRO_5003053810" description="Autophagy-related protein 27">
    <location>
        <begin position="23"/>
        <end position="305"/>
    </location>
</feature>
<feature type="topological domain" description="Lumenal" evidence="1">
    <location>
        <begin position="23"/>
        <end position="242"/>
    </location>
</feature>
<feature type="transmembrane region" description="Helical" evidence="2">
    <location>
        <begin position="243"/>
        <end position="263"/>
    </location>
</feature>
<feature type="topological domain" description="Cytoplasmic" evidence="1">
    <location>
        <begin position="264"/>
        <end position="305"/>
    </location>
</feature>
<feature type="domain" description="MRH" evidence="4">
    <location>
        <begin position="24"/>
        <end position="231"/>
    </location>
</feature>
<feature type="region of interest" description="Disordered" evidence="5">
    <location>
        <begin position="163"/>
        <end position="202"/>
    </location>
</feature>
<feature type="glycosylation site" description="N-linked (GlcNAc...) asparagine" evidence="3">
    <location>
        <position position="58"/>
    </location>
</feature>
<feature type="glycosylation site" description="N-linked (GlcNAc...) asparagine" evidence="3">
    <location>
        <position position="85"/>
    </location>
</feature>
<feature type="disulfide bond" evidence="4">
    <location>
        <begin position="26"/>
        <end position="66"/>
    </location>
</feature>
<feature type="disulfide bond" evidence="4">
    <location>
        <begin position="74"/>
        <end position="81"/>
    </location>
</feature>
<feature type="disulfide bond" evidence="4">
    <location>
        <begin position="156"/>
        <end position="229"/>
    </location>
</feature>